<evidence type="ECO:0000255" key="1">
    <source>
        <dbReference type="HAMAP-Rule" id="MF_00316"/>
    </source>
</evidence>
<feature type="chain" id="PRO_1000132961" description="Molybdenum cofactor guanylyltransferase">
    <location>
        <begin position="1"/>
        <end position="209"/>
    </location>
</feature>
<feature type="binding site" evidence="1">
    <location>
        <begin position="16"/>
        <end position="18"/>
    </location>
    <ligand>
        <name>GTP</name>
        <dbReference type="ChEBI" id="CHEBI:37565"/>
    </ligand>
</feature>
<feature type="binding site" evidence="1">
    <location>
        <position position="28"/>
    </location>
    <ligand>
        <name>GTP</name>
        <dbReference type="ChEBI" id="CHEBI:37565"/>
    </ligand>
</feature>
<feature type="binding site" evidence="1">
    <location>
        <position position="56"/>
    </location>
    <ligand>
        <name>GTP</name>
        <dbReference type="ChEBI" id="CHEBI:37565"/>
    </ligand>
</feature>
<feature type="binding site" evidence="1">
    <location>
        <position position="69"/>
    </location>
    <ligand>
        <name>GTP</name>
        <dbReference type="ChEBI" id="CHEBI:37565"/>
    </ligand>
</feature>
<feature type="binding site" evidence="1">
    <location>
        <position position="103"/>
    </location>
    <ligand>
        <name>GTP</name>
        <dbReference type="ChEBI" id="CHEBI:37565"/>
    </ligand>
</feature>
<feature type="binding site" evidence="1">
    <location>
        <position position="103"/>
    </location>
    <ligand>
        <name>Mg(2+)</name>
        <dbReference type="ChEBI" id="CHEBI:18420"/>
    </ligand>
</feature>
<name>MOBA_RHIJ3</name>
<sequence>MAEFSLDKSHIAGVVLAGGRSQRMGRDKAGVMLGAESLLRHALTRLSQQALHVAVNADAAAEDVPVVPDRFPGKAGPMAGIHAAMVYAADLPSITHVVTVSVDCPFFPADLVARLAAAIEHPSQIAIAASEGRSHPVFGLWPVTLAADLEAWIATDEKRRVRDFLLRHDVTEVAFPLHPTRASLLDPFFNINTPDDLVEAERWLEALRA</sequence>
<reference key="1">
    <citation type="journal article" date="2006" name="Genome Biol.">
        <title>The genome of Rhizobium leguminosarum has recognizable core and accessory components.</title>
        <authorList>
            <person name="Young J.P.W."/>
            <person name="Crossman L.C."/>
            <person name="Johnston A.W.B."/>
            <person name="Thomson N.R."/>
            <person name="Ghazoui Z.F."/>
            <person name="Hull K.H."/>
            <person name="Wexler M."/>
            <person name="Curson A.R.J."/>
            <person name="Todd J.D."/>
            <person name="Poole P.S."/>
            <person name="Mauchline T.H."/>
            <person name="East A.K."/>
            <person name="Quail M.A."/>
            <person name="Churcher C."/>
            <person name="Arrowsmith C."/>
            <person name="Cherevach I."/>
            <person name="Chillingworth T."/>
            <person name="Clarke K."/>
            <person name="Cronin A."/>
            <person name="Davis P."/>
            <person name="Fraser A."/>
            <person name="Hance Z."/>
            <person name="Hauser H."/>
            <person name="Jagels K."/>
            <person name="Moule S."/>
            <person name="Mungall K."/>
            <person name="Norbertczak H."/>
            <person name="Rabbinowitsch E."/>
            <person name="Sanders M."/>
            <person name="Simmonds M."/>
            <person name="Whitehead S."/>
            <person name="Parkhill J."/>
        </authorList>
    </citation>
    <scope>NUCLEOTIDE SEQUENCE [LARGE SCALE GENOMIC DNA]</scope>
    <source>
        <strain>DSM 114642 / LMG 32736 / 3841</strain>
    </source>
</reference>
<protein>
    <recommendedName>
        <fullName evidence="1">Molybdenum cofactor guanylyltransferase</fullName>
        <shortName evidence="1">MoCo guanylyltransferase</shortName>
        <ecNumber evidence="1">2.7.7.77</ecNumber>
    </recommendedName>
    <alternativeName>
        <fullName evidence="1">GTP:molybdopterin guanylyltransferase</fullName>
    </alternativeName>
    <alternativeName>
        <fullName evidence="1">Mo-MPT guanylyltransferase</fullName>
    </alternativeName>
    <alternativeName>
        <fullName evidence="1">Molybdopterin guanylyltransferase</fullName>
    </alternativeName>
    <alternativeName>
        <fullName evidence="1">Molybdopterin-guanine dinucleotide synthase</fullName>
        <shortName evidence="1">MGD synthase</shortName>
    </alternativeName>
</protein>
<organism>
    <name type="scientific">Rhizobium johnstonii (strain DSM 114642 / LMG 32736 / 3841)</name>
    <name type="common">Rhizobium leguminosarum bv. viciae</name>
    <dbReference type="NCBI Taxonomy" id="216596"/>
    <lineage>
        <taxon>Bacteria</taxon>
        <taxon>Pseudomonadati</taxon>
        <taxon>Pseudomonadota</taxon>
        <taxon>Alphaproteobacteria</taxon>
        <taxon>Hyphomicrobiales</taxon>
        <taxon>Rhizobiaceae</taxon>
        <taxon>Rhizobium/Agrobacterium group</taxon>
        <taxon>Rhizobium</taxon>
        <taxon>Rhizobium johnstonii</taxon>
    </lineage>
</organism>
<accession>Q1MFQ6</accession>
<proteinExistence type="inferred from homology"/>
<dbReference type="EC" id="2.7.7.77" evidence="1"/>
<dbReference type="EMBL" id="AM236080">
    <property type="protein sequence ID" value="CAK08218.1"/>
    <property type="molecule type" value="Genomic_DNA"/>
</dbReference>
<dbReference type="RefSeq" id="WP_011652261.1">
    <property type="nucleotide sequence ID" value="NC_008380.1"/>
</dbReference>
<dbReference type="SMR" id="Q1MFQ6"/>
<dbReference type="EnsemblBacteria" id="CAK08218">
    <property type="protein sequence ID" value="CAK08218"/>
    <property type="gene ID" value="RL2729"/>
</dbReference>
<dbReference type="KEGG" id="rle:RL2729"/>
<dbReference type="eggNOG" id="COG0746">
    <property type="taxonomic scope" value="Bacteria"/>
</dbReference>
<dbReference type="HOGENOM" id="CLU_055597_5_0_5"/>
<dbReference type="Proteomes" id="UP000006575">
    <property type="component" value="Chromosome"/>
</dbReference>
<dbReference type="GO" id="GO:0005737">
    <property type="term" value="C:cytoplasm"/>
    <property type="evidence" value="ECO:0007669"/>
    <property type="project" value="UniProtKB-SubCell"/>
</dbReference>
<dbReference type="GO" id="GO:0005525">
    <property type="term" value="F:GTP binding"/>
    <property type="evidence" value="ECO:0007669"/>
    <property type="project" value="UniProtKB-UniRule"/>
</dbReference>
<dbReference type="GO" id="GO:0046872">
    <property type="term" value="F:metal ion binding"/>
    <property type="evidence" value="ECO:0007669"/>
    <property type="project" value="UniProtKB-KW"/>
</dbReference>
<dbReference type="GO" id="GO:0061603">
    <property type="term" value="F:molybdenum cofactor guanylyltransferase activity"/>
    <property type="evidence" value="ECO:0007669"/>
    <property type="project" value="UniProtKB-EC"/>
</dbReference>
<dbReference type="GO" id="GO:1902758">
    <property type="term" value="P:bis(molybdopterin guanine dinucleotide)molybdenum biosynthetic process"/>
    <property type="evidence" value="ECO:0007669"/>
    <property type="project" value="TreeGrafter"/>
</dbReference>
<dbReference type="CDD" id="cd02503">
    <property type="entry name" value="MobA"/>
    <property type="match status" value="1"/>
</dbReference>
<dbReference type="Gene3D" id="3.90.550.10">
    <property type="entry name" value="Spore Coat Polysaccharide Biosynthesis Protein SpsA, Chain A"/>
    <property type="match status" value="1"/>
</dbReference>
<dbReference type="HAMAP" id="MF_00316">
    <property type="entry name" value="MobA"/>
    <property type="match status" value="1"/>
</dbReference>
<dbReference type="InterPro" id="IPR025877">
    <property type="entry name" value="MobA-like_NTP_Trfase"/>
</dbReference>
<dbReference type="InterPro" id="IPR013482">
    <property type="entry name" value="Molybde_CF_guanTrfase"/>
</dbReference>
<dbReference type="InterPro" id="IPR029044">
    <property type="entry name" value="Nucleotide-diphossugar_trans"/>
</dbReference>
<dbReference type="NCBIfam" id="TIGR02665">
    <property type="entry name" value="molyb_mobA"/>
    <property type="match status" value="1"/>
</dbReference>
<dbReference type="PANTHER" id="PTHR19136">
    <property type="entry name" value="MOLYBDENUM COFACTOR GUANYLYLTRANSFERASE"/>
    <property type="match status" value="1"/>
</dbReference>
<dbReference type="PANTHER" id="PTHR19136:SF81">
    <property type="entry name" value="MOLYBDENUM COFACTOR GUANYLYLTRANSFERASE"/>
    <property type="match status" value="1"/>
</dbReference>
<dbReference type="Pfam" id="PF12804">
    <property type="entry name" value="NTP_transf_3"/>
    <property type="match status" value="1"/>
</dbReference>
<dbReference type="SUPFAM" id="SSF53448">
    <property type="entry name" value="Nucleotide-diphospho-sugar transferases"/>
    <property type="match status" value="1"/>
</dbReference>
<comment type="function">
    <text evidence="1">Transfers a GMP moiety from GTP to Mo-molybdopterin (Mo-MPT) cofactor (Moco or molybdenum cofactor) to form Mo-molybdopterin guanine dinucleotide (Mo-MGD) cofactor.</text>
</comment>
<comment type="catalytic activity">
    <reaction evidence="1">
        <text>Mo-molybdopterin + GTP + H(+) = Mo-molybdopterin guanine dinucleotide + diphosphate</text>
        <dbReference type="Rhea" id="RHEA:34243"/>
        <dbReference type="ChEBI" id="CHEBI:15378"/>
        <dbReference type="ChEBI" id="CHEBI:33019"/>
        <dbReference type="ChEBI" id="CHEBI:37565"/>
        <dbReference type="ChEBI" id="CHEBI:71302"/>
        <dbReference type="ChEBI" id="CHEBI:71310"/>
        <dbReference type="EC" id="2.7.7.77"/>
    </reaction>
</comment>
<comment type="cofactor">
    <cofactor evidence="1">
        <name>Mg(2+)</name>
        <dbReference type="ChEBI" id="CHEBI:18420"/>
    </cofactor>
</comment>
<comment type="subunit">
    <text evidence="1">Monomer.</text>
</comment>
<comment type="subcellular location">
    <subcellularLocation>
        <location evidence="1">Cytoplasm</location>
    </subcellularLocation>
</comment>
<comment type="domain">
    <text evidence="1">The N-terminal domain determines nucleotide recognition and specific binding, while the C-terminal domain determines the specific binding to the target protein.</text>
</comment>
<comment type="similarity">
    <text evidence="1">Belongs to the MobA family.</text>
</comment>
<keyword id="KW-0963">Cytoplasm</keyword>
<keyword id="KW-0342">GTP-binding</keyword>
<keyword id="KW-0460">Magnesium</keyword>
<keyword id="KW-0479">Metal-binding</keyword>
<keyword id="KW-0501">Molybdenum cofactor biosynthesis</keyword>
<keyword id="KW-0547">Nucleotide-binding</keyword>
<keyword id="KW-0808">Transferase</keyword>
<gene>
    <name evidence="1" type="primary">mobA</name>
    <name type="ordered locus">RL2729</name>
</gene>